<sequence>MVSRLSKRYRSRVQFSISVMDENIYLSLSQINKDIRKENKSVRNRLQSILLDNKFLQDRVIPIFPHYPLIPNERCGLWYCNPSSFKQTSYFKSTDGHVNQWDFSTRRLNFHLLETIRDNKGIIIVDSTRRGKKIPDALSKTVPIWCAVLNTLMLQETEKNVAIDKVLYLPPETVPKSEYDMIKRKIPELVAKLQKLNIIDSKKLNELFMGKLLRPIWVHPGSSLLDHSVDYFTGEVQEYEAWETPEDQNIIPIILCTVSYQAQDGMDKRYGFTYVQGAADDHELWSFGLDSNMFWAHIEYLGDASYSDDQLHDYIMDLAAAKLRNQCYIQDKGSLDEVFGNIDKITNEISLGKVSSGLTINKNLKQKLKSEYGKVIIFSNSVTVAEDTDDEEESGTDPFISIYKLQSGDKKSSKALRSTFPRIHGEIQSLFTNRDEKIKPMLICCNTGTDMSIGVILSILCTKYTEEWMLTSELPDISKLIVRKHLTKLISHLKGRNVNPSRATLNSVNSFLM</sequence>
<proteinExistence type="evidence at protein level"/>
<keyword id="KW-0328">Glycosyltransferase</keyword>
<keyword id="KW-1185">Reference proteome</keyword>
<keyword id="KW-0808">Transferase</keyword>
<keyword id="KW-0819">tRNA processing</keyword>
<dbReference type="EC" id="2.4.2.-"/>
<dbReference type="EMBL" id="X80795">
    <property type="protein sequence ID" value="CAA56770.1"/>
    <property type="molecule type" value="Genomic_DNA"/>
</dbReference>
<dbReference type="EMBL" id="Z49704">
    <property type="protein sequence ID" value="CAA89781.1"/>
    <property type="molecule type" value="Genomic_DNA"/>
</dbReference>
<dbReference type="EMBL" id="AY692815">
    <property type="protein sequence ID" value="AAT92834.1"/>
    <property type="molecule type" value="Genomic_DNA"/>
</dbReference>
<dbReference type="EMBL" id="M59860">
    <property type="status" value="NOT_ANNOTATED_CDS"/>
    <property type="molecule type" value="Genomic_DNA"/>
</dbReference>
<dbReference type="EMBL" id="BK006946">
    <property type="protein sequence ID" value="DAA10184.1"/>
    <property type="molecule type" value="Genomic_DNA"/>
</dbReference>
<dbReference type="PIR" id="S54590">
    <property type="entry name" value="S54590"/>
</dbReference>
<dbReference type="RefSeq" id="NP_014010.1">
    <property type="nucleotide sequence ID" value="NM_001182790.1"/>
</dbReference>
<dbReference type="SMR" id="P23796"/>
<dbReference type="BioGRID" id="35462">
    <property type="interactions" value="122"/>
</dbReference>
<dbReference type="FunCoup" id="P23796">
    <property type="interactions" value="85"/>
</dbReference>
<dbReference type="IntAct" id="P23796">
    <property type="interactions" value="2"/>
</dbReference>
<dbReference type="STRING" id="4932.YMR283C"/>
<dbReference type="iPTMnet" id="P23796"/>
<dbReference type="PaxDb" id="4932-YMR283C"/>
<dbReference type="PeptideAtlas" id="P23796"/>
<dbReference type="EnsemblFungi" id="YMR283C_mRNA">
    <property type="protein sequence ID" value="YMR283C"/>
    <property type="gene ID" value="YMR283C"/>
</dbReference>
<dbReference type="GeneID" id="855326"/>
<dbReference type="KEGG" id="sce:YMR283C"/>
<dbReference type="AGR" id="SGD:S000004896"/>
<dbReference type="SGD" id="S000004896">
    <property type="gene designation" value="RIT1"/>
</dbReference>
<dbReference type="VEuPathDB" id="FungiDB:YMR283C"/>
<dbReference type="eggNOG" id="KOG2634">
    <property type="taxonomic scope" value="Eukaryota"/>
</dbReference>
<dbReference type="HOGENOM" id="CLU_027654_1_1_1"/>
<dbReference type="InParanoid" id="P23796"/>
<dbReference type="OMA" id="PVFWANQ"/>
<dbReference type="OrthoDB" id="45256at2759"/>
<dbReference type="BioCyc" id="YEAST:G3O-32953-MONOMER"/>
<dbReference type="BioGRID-ORCS" id="855326">
    <property type="hits" value="1 hit in 10 CRISPR screens"/>
</dbReference>
<dbReference type="CD-CODE" id="E03F929F">
    <property type="entry name" value="Stress granule"/>
</dbReference>
<dbReference type="PRO" id="PR:P23796"/>
<dbReference type="Proteomes" id="UP000002311">
    <property type="component" value="Chromosome XIII"/>
</dbReference>
<dbReference type="RNAct" id="P23796">
    <property type="molecule type" value="protein"/>
</dbReference>
<dbReference type="GO" id="GO:0005737">
    <property type="term" value="C:cytoplasm"/>
    <property type="evidence" value="ECO:0007005"/>
    <property type="project" value="SGD"/>
</dbReference>
<dbReference type="GO" id="GO:0016763">
    <property type="term" value="F:pentosyltransferase activity"/>
    <property type="evidence" value="ECO:0000314"/>
    <property type="project" value="SGD"/>
</dbReference>
<dbReference type="GO" id="GO:0043399">
    <property type="term" value="F:tRNA adenosine(64)-2'-O-ribosylphosphate transferase activity"/>
    <property type="evidence" value="ECO:0007669"/>
    <property type="project" value="InterPro"/>
</dbReference>
<dbReference type="GO" id="GO:0019988">
    <property type="term" value="P:charged-tRNA amino acid modification"/>
    <property type="evidence" value="ECO:0000315"/>
    <property type="project" value="SGD"/>
</dbReference>
<dbReference type="InterPro" id="IPR007306">
    <property type="entry name" value="Rit1"/>
</dbReference>
<dbReference type="InterPro" id="IPR033421">
    <property type="entry name" value="Rit1_DUSP-like"/>
</dbReference>
<dbReference type="InterPro" id="IPR033449">
    <property type="entry name" value="Rit1_N"/>
</dbReference>
<dbReference type="PANTHER" id="PTHR31811">
    <property type="entry name" value="TRNA A64-2'-O-RIBOSYLPHOSPHATE TRANSFERASE"/>
    <property type="match status" value="1"/>
</dbReference>
<dbReference type="PANTHER" id="PTHR31811:SF0">
    <property type="entry name" value="TRNA A64-2'-O-RIBOSYLPHOSPHATE TRANSFERASE"/>
    <property type="match status" value="1"/>
</dbReference>
<dbReference type="Pfam" id="PF04179">
    <property type="entry name" value="Init_tRNA_PT"/>
    <property type="match status" value="1"/>
</dbReference>
<dbReference type="Pfam" id="PF17184">
    <property type="entry name" value="Rit1_C"/>
    <property type="match status" value="1"/>
</dbReference>
<dbReference type="PIRSF" id="PIRSF007747">
    <property type="entry name" value="Ribosyl_Ptfrase"/>
    <property type="match status" value="1"/>
</dbReference>
<name>RIT1_YEAST</name>
<organism>
    <name type="scientific">Saccharomyces cerevisiae (strain ATCC 204508 / S288c)</name>
    <name type="common">Baker's yeast</name>
    <dbReference type="NCBI Taxonomy" id="559292"/>
    <lineage>
        <taxon>Eukaryota</taxon>
        <taxon>Fungi</taxon>
        <taxon>Dikarya</taxon>
        <taxon>Ascomycota</taxon>
        <taxon>Saccharomycotina</taxon>
        <taxon>Saccharomycetes</taxon>
        <taxon>Saccharomycetales</taxon>
        <taxon>Saccharomycetaceae</taxon>
        <taxon>Saccharomyces</taxon>
    </lineage>
</organism>
<accession>P23796</accession>
<accession>D6W0B0</accession>
<reference key="1">
    <citation type="journal article" date="1994" name="Cell">
        <title>Rit1, a tRNA backbone-modifying enzyme that mediates initiator and elongator tRNA discrimination.</title>
        <authorList>
            <person name="Aastroem S.U."/>
            <person name="Bystroem A.S."/>
        </authorList>
    </citation>
    <scope>NUCLEOTIDE SEQUENCE [GENOMIC DNA] OF 20-513</scope>
    <source>
        <strain>S288c / YPH1</strain>
    </source>
</reference>
<reference key="2">
    <citation type="journal article" date="1997" name="Nature">
        <title>The nucleotide sequence of Saccharomyces cerevisiae chromosome XIII.</title>
        <authorList>
            <person name="Bowman S."/>
            <person name="Churcher C.M."/>
            <person name="Badcock K."/>
            <person name="Brown D."/>
            <person name="Chillingworth T."/>
            <person name="Connor R."/>
            <person name="Dedman K."/>
            <person name="Devlin K."/>
            <person name="Gentles S."/>
            <person name="Hamlin N."/>
            <person name="Hunt S."/>
            <person name="Jagels K."/>
            <person name="Lye G."/>
            <person name="Moule S."/>
            <person name="Odell C."/>
            <person name="Pearson D."/>
            <person name="Rajandream M.A."/>
            <person name="Rice P."/>
            <person name="Skelton J."/>
            <person name="Walsh S.V."/>
            <person name="Whitehead S."/>
            <person name="Barrell B.G."/>
        </authorList>
    </citation>
    <scope>NUCLEOTIDE SEQUENCE [LARGE SCALE GENOMIC DNA]</scope>
    <source>
        <strain>ATCC 204508 / S288c</strain>
    </source>
</reference>
<reference key="3">
    <citation type="journal article" date="2014" name="G3 (Bethesda)">
        <title>The reference genome sequence of Saccharomyces cerevisiae: Then and now.</title>
        <authorList>
            <person name="Engel S.R."/>
            <person name="Dietrich F.S."/>
            <person name="Fisk D.G."/>
            <person name="Binkley G."/>
            <person name="Balakrishnan R."/>
            <person name="Costanzo M.C."/>
            <person name="Dwight S.S."/>
            <person name="Hitz B.C."/>
            <person name="Karra K."/>
            <person name="Nash R.S."/>
            <person name="Weng S."/>
            <person name="Wong E.D."/>
            <person name="Lloyd P."/>
            <person name="Skrzypek M.S."/>
            <person name="Miyasato S.R."/>
            <person name="Simison M."/>
            <person name="Cherry J.M."/>
        </authorList>
    </citation>
    <scope>GENOME REANNOTATION</scope>
    <source>
        <strain>ATCC 204508 / S288c</strain>
    </source>
</reference>
<reference key="4">
    <citation type="journal article" date="2007" name="Genome Res.">
        <title>Approaching a complete repository of sequence-verified protein-encoding clones for Saccharomyces cerevisiae.</title>
        <authorList>
            <person name="Hu Y."/>
            <person name="Rolfs A."/>
            <person name="Bhullar B."/>
            <person name="Murthy T.V.S."/>
            <person name="Zhu C."/>
            <person name="Berger M.F."/>
            <person name="Camargo A.A."/>
            <person name="Kelley F."/>
            <person name="McCarron S."/>
            <person name="Jepson D."/>
            <person name="Richardson A."/>
            <person name="Raphael J."/>
            <person name="Moreira D."/>
            <person name="Taycher E."/>
            <person name="Zuo D."/>
            <person name="Mohr S."/>
            <person name="Kane M.F."/>
            <person name="Williamson J."/>
            <person name="Simpson A.J.G."/>
            <person name="Bulyk M.L."/>
            <person name="Harlow E."/>
            <person name="Marsischky G."/>
            <person name="Kolodner R.D."/>
            <person name="LaBaer J."/>
        </authorList>
    </citation>
    <scope>NUCLEOTIDE SEQUENCE [GENOMIC DNA]</scope>
    <source>
        <strain>ATCC 204508 / S288c</strain>
    </source>
</reference>
<reference key="5">
    <citation type="journal article" date="1991" name="Curr. Genet.">
        <title>Characterization of a yeast nuclear gene, AEP2, required for accumulation of mitochondrial mRNA encoding subunit 9 of the ATP synthase.</title>
        <authorList>
            <person name="Payne M.J."/>
            <person name="Finnegan P.M."/>
            <person name="Keramidaris E."/>
            <person name="Lukins H.B."/>
        </authorList>
    </citation>
    <scope>NUCLEOTIDE SEQUENCE [GENOMIC DNA] OF 418-513</scope>
</reference>
<reference key="6">
    <citation type="journal article" date="2003" name="Nature">
        <title>Global analysis of protein expression in yeast.</title>
        <authorList>
            <person name="Ghaemmaghami S."/>
            <person name="Huh W.-K."/>
            <person name="Bower K."/>
            <person name="Howson R.W."/>
            <person name="Belle A."/>
            <person name="Dephoure N."/>
            <person name="O'Shea E.K."/>
            <person name="Weissman J.S."/>
        </authorList>
    </citation>
    <scope>LEVEL OF PROTEIN EXPRESSION [LARGE SCALE ANALYSIS]</scope>
</reference>
<feature type="chain" id="PRO_0000097353" description="tRNA A64-2'-O-ribosylphosphate transferase">
    <location>
        <begin position="1"/>
        <end position="513"/>
    </location>
</feature>
<comment type="function">
    <text>tRNA backbone modifying enzyme that mediates initiator/ elongator tRNA discrimination. This enzyme modifies exclusively the initiator tRNA in position 64 using 5'-phosphoribosyl-1'-pyrophosphate as the modification donor. Recognize the stem-loop IV region that is unique in eukaryotic cytoplasmic initiator tRNAs.</text>
</comment>
<comment type="miscellaneous">
    <text evidence="1">Present with 259 molecules/cell in log phase SD medium.</text>
</comment>
<gene>
    <name type="primary">RIT1</name>
    <name type="ordered locus">YMR283C</name>
    <name type="ORF">YM8021.09C</name>
</gene>
<evidence type="ECO:0000269" key="1">
    <source>
    </source>
</evidence>
<protein>
    <recommendedName>
        <fullName>tRNA A64-2'-O-ribosylphosphate transferase</fullName>
        <ecNumber>2.4.2.-</ecNumber>
    </recommendedName>
    <alternativeName>
        <fullName>Initiator tRNA phosphoribosyl-transferase</fullName>
    </alternativeName>
</protein>